<accession>B3PHF4</accession>
<gene>
    <name evidence="1" type="primary">aroC</name>
    <name type="ordered locus">CJA_1949</name>
</gene>
<sequence>MSGNTYGKLFTVTTFGESHGAALGCIVDGCPPGLELSEQDIQIDLDRRKPGQSRYTTQRREDDQVKILSGVFEGKTTGTPIGMLIENTDQRSKDYSNIKDQFRPAHADYTYMQKYGVRDYRGGGRSSARETAMRVAAGAIAKKYLKDFHGIEVRGYLSQLGPVKIETVDWDQVDQNPFFCPDASKVPAMEEFMKTLNKEGDSIGAKITVVATGVPPGLGEPIFDRLDAEIAHALMSINAVKGVEIGEGFAVVEQRGSKHRDEITPEGFLSNNAGGILGGISSGQDIIANIALKPTSSLHIPGRSVDVHGNPVEVVTKGRHDPCVGIRATPIAEAMLALVLMDHLLRHRGQNGGVQHRIPVIPASAK</sequence>
<proteinExistence type="inferred from homology"/>
<organism>
    <name type="scientific">Cellvibrio japonicus (strain Ueda107)</name>
    <name type="common">Pseudomonas fluorescens subsp. cellulosa</name>
    <dbReference type="NCBI Taxonomy" id="498211"/>
    <lineage>
        <taxon>Bacteria</taxon>
        <taxon>Pseudomonadati</taxon>
        <taxon>Pseudomonadota</taxon>
        <taxon>Gammaproteobacteria</taxon>
        <taxon>Cellvibrionales</taxon>
        <taxon>Cellvibrionaceae</taxon>
        <taxon>Cellvibrio</taxon>
    </lineage>
</organism>
<feature type="chain" id="PRO_1000115338" description="Chorismate synthase">
    <location>
        <begin position="1"/>
        <end position="366"/>
    </location>
</feature>
<feature type="binding site" evidence="1">
    <location>
        <position position="48"/>
    </location>
    <ligand>
        <name>NADP(+)</name>
        <dbReference type="ChEBI" id="CHEBI:58349"/>
    </ligand>
</feature>
<feature type="binding site" evidence="1">
    <location>
        <position position="54"/>
    </location>
    <ligand>
        <name>NADP(+)</name>
        <dbReference type="ChEBI" id="CHEBI:58349"/>
    </ligand>
</feature>
<feature type="binding site" evidence="1">
    <location>
        <begin position="125"/>
        <end position="127"/>
    </location>
    <ligand>
        <name>FMN</name>
        <dbReference type="ChEBI" id="CHEBI:58210"/>
    </ligand>
</feature>
<feature type="binding site" evidence="1">
    <location>
        <begin position="238"/>
        <end position="239"/>
    </location>
    <ligand>
        <name>FMN</name>
        <dbReference type="ChEBI" id="CHEBI:58210"/>
    </ligand>
</feature>
<feature type="binding site" evidence="1">
    <location>
        <position position="278"/>
    </location>
    <ligand>
        <name>FMN</name>
        <dbReference type="ChEBI" id="CHEBI:58210"/>
    </ligand>
</feature>
<feature type="binding site" evidence="1">
    <location>
        <begin position="293"/>
        <end position="297"/>
    </location>
    <ligand>
        <name>FMN</name>
        <dbReference type="ChEBI" id="CHEBI:58210"/>
    </ligand>
</feature>
<feature type="binding site" evidence="1">
    <location>
        <position position="319"/>
    </location>
    <ligand>
        <name>FMN</name>
        <dbReference type="ChEBI" id="CHEBI:58210"/>
    </ligand>
</feature>
<comment type="function">
    <text evidence="1">Catalyzes the anti-1,4-elimination of the C-3 phosphate and the C-6 proR hydrogen from 5-enolpyruvylshikimate-3-phosphate (EPSP) to yield chorismate, which is the branch point compound that serves as the starting substrate for the three terminal pathways of aromatic amino acid biosynthesis. This reaction introduces a second double bond into the aromatic ring system.</text>
</comment>
<comment type="catalytic activity">
    <reaction evidence="1">
        <text>5-O-(1-carboxyvinyl)-3-phosphoshikimate = chorismate + phosphate</text>
        <dbReference type="Rhea" id="RHEA:21020"/>
        <dbReference type="ChEBI" id="CHEBI:29748"/>
        <dbReference type="ChEBI" id="CHEBI:43474"/>
        <dbReference type="ChEBI" id="CHEBI:57701"/>
        <dbReference type="EC" id="4.2.3.5"/>
    </reaction>
</comment>
<comment type="cofactor">
    <cofactor evidence="1">
        <name>FMNH2</name>
        <dbReference type="ChEBI" id="CHEBI:57618"/>
    </cofactor>
    <text evidence="1">Reduced FMN (FMNH(2)).</text>
</comment>
<comment type="pathway">
    <text evidence="1">Metabolic intermediate biosynthesis; chorismate biosynthesis; chorismate from D-erythrose 4-phosphate and phosphoenolpyruvate: step 7/7.</text>
</comment>
<comment type="subunit">
    <text evidence="1">Homotetramer.</text>
</comment>
<comment type="similarity">
    <text evidence="1">Belongs to the chorismate synthase family.</text>
</comment>
<protein>
    <recommendedName>
        <fullName evidence="1">Chorismate synthase</fullName>
        <shortName evidence="1">CS</shortName>
        <ecNumber evidence="1">4.2.3.5</ecNumber>
    </recommendedName>
    <alternativeName>
        <fullName evidence="1">5-enolpyruvylshikimate-3-phosphate phospholyase</fullName>
    </alternativeName>
</protein>
<dbReference type="EC" id="4.2.3.5" evidence="1"/>
<dbReference type="EMBL" id="CP000934">
    <property type="protein sequence ID" value="ACE83711.1"/>
    <property type="molecule type" value="Genomic_DNA"/>
</dbReference>
<dbReference type="RefSeq" id="WP_012487563.1">
    <property type="nucleotide sequence ID" value="NC_010995.1"/>
</dbReference>
<dbReference type="SMR" id="B3PHF4"/>
<dbReference type="STRING" id="498211.CJA_1949"/>
<dbReference type="KEGG" id="cja:CJA_1949"/>
<dbReference type="eggNOG" id="COG0082">
    <property type="taxonomic scope" value="Bacteria"/>
</dbReference>
<dbReference type="HOGENOM" id="CLU_034547_0_2_6"/>
<dbReference type="OrthoDB" id="9771806at2"/>
<dbReference type="UniPathway" id="UPA00053">
    <property type="reaction ID" value="UER00090"/>
</dbReference>
<dbReference type="Proteomes" id="UP000001036">
    <property type="component" value="Chromosome"/>
</dbReference>
<dbReference type="GO" id="GO:0005829">
    <property type="term" value="C:cytosol"/>
    <property type="evidence" value="ECO:0007669"/>
    <property type="project" value="TreeGrafter"/>
</dbReference>
<dbReference type="GO" id="GO:0004107">
    <property type="term" value="F:chorismate synthase activity"/>
    <property type="evidence" value="ECO:0007669"/>
    <property type="project" value="UniProtKB-UniRule"/>
</dbReference>
<dbReference type="GO" id="GO:0010181">
    <property type="term" value="F:FMN binding"/>
    <property type="evidence" value="ECO:0007669"/>
    <property type="project" value="TreeGrafter"/>
</dbReference>
<dbReference type="GO" id="GO:0008652">
    <property type="term" value="P:amino acid biosynthetic process"/>
    <property type="evidence" value="ECO:0007669"/>
    <property type="project" value="UniProtKB-KW"/>
</dbReference>
<dbReference type="GO" id="GO:0009073">
    <property type="term" value="P:aromatic amino acid family biosynthetic process"/>
    <property type="evidence" value="ECO:0007669"/>
    <property type="project" value="UniProtKB-KW"/>
</dbReference>
<dbReference type="GO" id="GO:0009423">
    <property type="term" value="P:chorismate biosynthetic process"/>
    <property type="evidence" value="ECO:0007669"/>
    <property type="project" value="UniProtKB-UniRule"/>
</dbReference>
<dbReference type="CDD" id="cd07304">
    <property type="entry name" value="Chorismate_synthase"/>
    <property type="match status" value="1"/>
</dbReference>
<dbReference type="FunFam" id="3.60.150.10:FF:000001">
    <property type="entry name" value="Chorismate synthase"/>
    <property type="match status" value="1"/>
</dbReference>
<dbReference type="Gene3D" id="3.60.150.10">
    <property type="entry name" value="Chorismate synthase AroC"/>
    <property type="match status" value="1"/>
</dbReference>
<dbReference type="HAMAP" id="MF_00300">
    <property type="entry name" value="Chorismate_synth"/>
    <property type="match status" value="1"/>
</dbReference>
<dbReference type="InterPro" id="IPR000453">
    <property type="entry name" value="Chorismate_synth"/>
</dbReference>
<dbReference type="InterPro" id="IPR035904">
    <property type="entry name" value="Chorismate_synth_AroC_sf"/>
</dbReference>
<dbReference type="InterPro" id="IPR020541">
    <property type="entry name" value="Chorismate_synthase_CS"/>
</dbReference>
<dbReference type="NCBIfam" id="TIGR00033">
    <property type="entry name" value="aroC"/>
    <property type="match status" value="1"/>
</dbReference>
<dbReference type="NCBIfam" id="NF003793">
    <property type="entry name" value="PRK05382.1"/>
    <property type="match status" value="1"/>
</dbReference>
<dbReference type="PANTHER" id="PTHR21085">
    <property type="entry name" value="CHORISMATE SYNTHASE"/>
    <property type="match status" value="1"/>
</dbReference>
<dbReference type="PANTHER" id="PTHR21085:SF0">
    <property type="entry name" value="CHORISMATE SYNTHASE"/>
    <property type="match status" value="1"/>
</dbReference>
<dbReference type="Pfam" id="PF01264">
    <property type="entry name" value="Chorismate_synt"/>
    <property type="match status" value="1"/>
</dbReference>
<dbReference type="PIRSF" id="PIRSF001456">
    <property type="entry name" value="Chorismate_synth"/>
    <property type="match status" value="1"/>
</dbReference>
<dbReference type="SUPFAM" id="SSF103263">
    <property type="entry name" value="Chorismate synthase, AroC"/>
    <property type="match status" value="1"/>
</dbReference>
<dbReference type="PROSITE" id="PS00787">
    <property type="entry name" value="CHORISMATE_SYNTHASE_1"/>
    <property type="match status" value="1"/>
</dbReference>
<dbReference type="PROSITE" id="PS00788">
    <property type="entry name" value="CHORISMATE_SYNTHASE_2"/>
    <property type="match status" value="1"/>
</dbReference>
<dbReference type="PROSITE" id="PS00789">
    <property type="entry name" value="CHORISMATE_SYNTHASE_3"/>
    <property type="match status" value="1"/>
</dbReference>
<evidence type="ECO:0000255" key="1">
    <source>
        <dbReference type="HAMAP-Rule" id="MF_00300"/>
    </source>
</evidence>
<keyword id="KW-0028">Amino-acid biosynthesis</keyword>
<keyword id="KW-0057">Aromatic amino acid biosynthesis</keyword>
<keyword id="KW-0274">FAD</keyword>
<keyword id="KW-0285">Flavoprotein</keyword>
<keyword id="KW-0288">FMN</keyword>
<keyword id="KW-0456">Lyase</keyword>
<keyword id="KW-0521">NADP</keyword>
<keyword id="KW-1185">Reference proteome</keyword>
<reference key="1">
    <citation type="journal article" date="2008" name="J. Bacteriol.">
        <title>Insights into plant cell wall degradation from the genome sequence of the soil bacterium Cellvibrio japonicus.</title>
        <authorList>
            <person name="DeBoy R.T."/>
            <person name="Mongodin E.F."/>
            <person name="Fouts D.E."/>
            <person name="Tailford L.E."/>
            <person name="Khouri H."/>
            <person name="Emerson J.B."/>
            <person name="Mohamoud Y."/>
            <person name="Watkins K."/>
            <person name="Henrissat B."/>
            <person name="Gilbert H.J."/>
            <person name="Nelson K.E."/>
        </authorList>
    </citation>
    <scope>NUCLEOTIDE SEQUENCE [LARGE SCALE GENOMIC DNA]</scope>
    <source>
        <strain>Ueda107</strain>
    </source>
</reference>
<name>AROC_CELJU</name>